<protein>
    <recommendedName>
        <fullName>F-box only protein 43</fullName>
    </recommendedName>
    <alternativeName>
        <fullName>Endogenous meiotic inhibitor 2</fullName>
    </alternativeName>
</protein>
<organism>
    <name type="scientific">Homo sapiens</name>
    <name type="common">Human</name>
    <dbReference type="NCBI Taxonomy" id="9606"/>
    <lineage>
        <taxon>Eukaryota</taxon>
        <taxon>Metazoa</taxon>
        <taxon>Chordata</taxon>
        <taxon>Craniata</taxon>
        <taxon>Vertebrata</taxon>
        <taxon>Euteleostomi</taxon>
        <taxon>Mammalia</taxon>
        <taxon>Eutheria</taxon>
        <taxon>Euarchontoglires</taxon>
        <taxon>Primates</taxon>
        <taxon>Haplorrhini</taxon>
        <taxon>Catarrhini</taxon>
        <taxon>Hominidae</taxon>
        <taxon>Homo</taxon>
    </lineage>
</organism>
<sequence>MSFKDKDERISCLEAYVTLTSKSSRFTDETEILKMSQRHSGQAGTEAGNGADSPPIVNSKYSTFRDFCSTSSFQDSGYNELKSCSFDNIDKEYLGKKEKGPTLLYEHPETSGLGLTHPLESPTQKKKCILPRKEKDKTPELCETPKISGKKCLPRRRLNVSFALLKGDFESQNSSLESSISQVINLEKNIPSSASGFSRANNFSPLVTSTLKTEEVTSCSQKLRLNFSQQKTSTIDDSKDDCSLFEVECISPIQGNNFKDSITHDFSDSSLCINDENACPELLGSSVSGTTCGTDEDIFVTPISNLVANIRFNASQILSPSPEVRGSISTPEDSGFNSLSLEKSEDSLSDQEGSFQELLQKHKGTPKVGDTIRKTRHLGRSRRLSTLREQSSQSETEEEKQIVHPDSEKRAAAASAISEGQLSSDESGDLTFSLKNLSKTPALQLVHELFMKSKRKRLQENSGHEFLEQGDGEKIAVLQCILAGLIGKKMGIEKLDILTELKYRNLKHILAMVLESLTAESLCSVWKVSRNWREIVVQDKNANRRRKFYITQLKTDSEGAVLNVEDAATRLQLLNRSALRSVQAQARIPGSQREQGSTLSPWGEVLTPLASSSVTHLSSKQEEYVKVAKTLFTDEALKPCPRCQSPAKYQPYKKRGLCSRTACGFDFCVLCLCAYHGSEECSRGAAKPRNRKDALPGSAQSKRNLKRL</sequence>
<reference key="1">
    <citation type="journal article" date="2006" name="Nature">
        <title>DNA sequence and analysis of human chromosome 8.</title>
        <authorList>
            <person name="Nusbaum C."/>
            <person name="Mikkelsen T.S."/>
            <person name="Zody M.C."/>
            <person name="Asakawa S."/>
            <person name="Taudien S."/>
            <person name="Garber M."/>
            <person name="Kodira C.D."/>
            <person name="Schueler M.G."/>
            <person name="Shimizu A."/>
            <person name="Whittaker C.A."/>
            <person name="Chang J.L."/>
            <person name="Cuomo C.A."/>
            <person name="Dewar K."/>
            <person name="FitzGerald M.G."/>
            <person name="Yang X."/>
            <person name="Allen N.R."/>
            <person name="Anderson S."/>
            <person name="Asakawa T."/>
            <person name="Blechschmidt K."/>
            <person name="Bloom T."/>
            <person name="Borowsky M.L."/>
            <person name="Butler J."/>
            <person name="Cook A."/>
            <person name="Corum B."/>
            <person name="DeArellano K."/>
            <person name="DeCaprio D."/>
            <person name="Dooley K.T."/>
            <person name="Dorris L. III"/>
            <person name="Engels R."/>
            <person name="Gloeckner G."/>
            <person name="Hafez N."/>
            <person name="Hagopian D.S."/>
            <person name="Hall J.L."/>
            <person name="Ishikawa S.K."/>
            <person name="Jaffe D.B."/>
            <person name="Kamat A."/>
            <person name="Kudoh J."/>
            <person name="Lehmann R."/>
            <person name="Lokitsang T."/>
            <person name="Macdonald P."/>
            <person name="Major J.E."/>
            <person name="Matthews C.D."/>
            <person name="Mauceli E."/>
            <person name="Menzel U."/>
            <person name="Mihalev A.H."/>
            <person name="Minoshima S."/>
            <person name="Murayama Y."/>
            <person name="Naylor J.W."/>
            <person name="Nicol R."/>
            <person name="Nguyen C."/>
            <person name="O'Leary S.B."/>
            <person name="O'Neill K."/>
            <person name="Parker S.C.J."/>
            <person name="Polley A."/>
            <person name="Raymond C.K."/>
            <person name="Reichwald K."/>
            <person name="Rodriguez J."/>
            <person name="Sasaki T."/>
            <person name="Schilhabel M."/>
            <person name="Siddiqui R."/>
            <person name="Smith C.L."/>
            <person name="Sneddon T.P."/>
            <person name="Talamas J.A."/>
            <person name="Tenzin P."/>
            <person name="Topham K."/>
            <person name="Venkataraman V."/>
            <person name="Wen G."/>
            <person name="Yamazaki S."/>
            <person name="Young S.K."/>
            <person name="Zeng Q."/>
            <person name="Zimmer A.R."/>
            <person name="Rosenthal A."/>
            <person name="Birren B.W."/>
            <person name="Platzer M."/>
            <person name="Shimizu N."/>
            <person name="Lander E.S."/>
        </authorList>
    </citation>
    <scope>NUCLEOTIDE SEQUENCE [LARGE SCALE GENOMIC DNA]</scope>
</reference>
<reference key="2">
    <citation type="journal article" date="2004" name="Genes Dev.">
        <title>Systematic analysis and nomenclature of mammalian F-box proteins.</title>
        <authorList>
            <person name="Jin J."/>
            <person name="Cardozo T."/>
            <person name="Lovering R.C."/>
            <person name="Elledge S.J."/>
            <person name="Pagano M."/>
            <person name="Harper J.W."/>
        </authorList>
    </citation>
    <scope>NOMENCLATURE</scope>
</reference>
<reference key="3">
    <citation type="journal article" date="2005" name="Proc. Natl. Acad. Sci. U.S.A.">
        <title>A role for the anaphase-promoting complex inhibitor Emi2/XErp1, a homolog of early mitotic inhibitor 1, in cytostatic factor arrest of Xenopus eggs.</title>
        <authorList>
            <person name="Tung J.J."/>
            <person name="Hansen D.V."/>
            <person name="Ban K.H."/>
            <person name="Loktev A.V."/>
            <person name="Summers M.K."/>
            <person name="Adler J.R. III"/>
            <person name="Jackson P.K."/>
        </authorList>
    </citation>
    <scope>UBIQUITINATION</scope>
    <scope>PHOSPHORYLATION AT SER-76 AND SER-334</scope>
    <scope>MUTAGENESIS OF 75-ASP-SER-76 AND 333-ASP-SER-334</scope>
</reference>
<reference key="4">
    <citation type="journal article" date="2006" name="Proc. Natl. Acad. Sci. U.S.A.">
        <title>CaMKII and polo-like kinase 1 sequentially phosphorylate the cytostatic factor Emi2/XErp1 to trigger its destruction and meiotic exit.</title>
        <authorList>
            <person name="Hansen D.V."/>
            <person name="Tung J.J."/>
            <person name="Jackson P.K."/>
        </authorList>
    </citation>
    <scope>PHOSPHORYLATION AT THR-234</scope>
</reference>
<reference key="5">
    <citation type="journal article" date="2019" name="Fertil. Steril.">
        <title>A novel homozygous FBXO43 mutation associated with male infertility and teratozoospermia in a consanguineous Chinese family.</title>
        <authorList>
            <person name="Ma Y."/>
            <person name="Xie N."/>
            <person name="Xie D."/>
            <person name="Sun L."/>
            <person name="Li S."/>
            <person name="Li P."/>
            <person name="Li Y."/>
            <person name="Li J."/>
            <person name="Dong Z."/>
            <person name="Xie X."/>
        </authorList>
    </citation>
    <scope>INVOLVEMENT IN SPGF64</scope>
    <scope>VARIANT SPGF64 ASP-664</scope>
    <scope>VARIANTS GLY-98; ALA-149; LEU-250 AND GLY-594</scope>
</reference>
<reference key="6">
    <citation type="journal article" date="2021" name="Hum. Reprod.">
        <title>FBXO43 variants in patients with female infertility characterized by early embryonic arrest.</title>
        <authorList>
            <person name="Wang W."/>
            <person name="Wang W."/>
            <person name="Xu Y."/>
            <person name="Shi J."/>
            <person name="Fu J."/>
            <person name="Chen B."/>
            <person name="Mu J."/>
            <person name="Zhang Z."/>
            <person name="Zhao L."/>
            <person name="Lin J."/>
            <person name="Du J."/>
            <person name="Li Q."/>
            <person name="He L."/>
            <person name="Jin L."/>
            <person name="Sun X."/>
            <person name="Wang L."/>
            <person name="Sang Q."/>
        </authorList>
    </citation>
    <scope>INVOLVEMENT IN OZEMA12</scope>
    <scope>VARIANT OZEMA12 583-GLN--LEU-708 DEL</scope>
    <scope>CHARACTERIZATION OF VARIANT OZEMA12 583-GLN--LEU-708 DEL</scope>
    <scope>FUNCTION</scope>
</reference>
<reference key="7">
    <citation type="journal article" date="2022" name="Clin. Genet.">
        <title>A homozygous loss-of-function mutation in FBXO43 causes human non-obstructive azoospermia.</title>
        <authorList>
            <person name="Wu H."/>
            <person name="Zhang X."/>
            <person name="Shen Q."/>
            <person name="Liu Y."/>
            <person name="Gao Y."/>
            <person name="Wang G."/>
            <person name="Lv M."/>
            <person name="Hua R."/>
            <person name="Xu Y."/>
            <person name="Zhou P."/>
            <person name="Wei Z."/>
            <person name="Tao F."/>
            <person name="He X."/>
            <person name="Cao Y."/>
            <person name="Liu M."/>
        </authorList>
    </citation>
    <scope>VARIANT SPGF64 583-GLN--LEU-708 DEL</scope>
    <scope>TISSUE SPECIFICITY</scope>
    <scope>SUBUNIT</scope>
    <scope>FUNCTION</scope>
</reference>
<evidence type="ECO:0000250" key="1">
    <source>
        <dbReference type="UniProtKB" id="Q8CDI2"/>
    </source>
</evidence>
<evidence type="ECO:0000255" key="2">
    <source>
        <dbReference type="PROSITE-ProRule" id="PRU01220"/>
    </source>
</evidence>
<evidence type="ECO:0000256" key="3">
    <source>
        <dbReference type="SAM" id="MobiDB-lite"/>
    </source>
</evidence>
<evidence type="ECO:0000269" key="4">
    <source>
    </source>
</evidence>
<evidence type="ECO:0000269" key="5">
    <source>
    </source>
</evidence>
<evidence type="ECO:0000269" key="6">
    <source>
    </source>
</evidence>
<evidence type="ECO:0000269" key="7">
    <source>
    </source>
</evidence>
<evidence type="ECO:0000269" key="8">
    <source>
    </source>
</evidence>
<evidence type="ECO:0000305" key="9">
    <source>
    </source>
</evidence>
<evidence type="ECO:0000305" key="10">
    <source>
    </source>
</evidence>
<name>FBX43_HUMAN</name>
<accession>Q4G163</accession>
<proteinExistence type="evidence at protein level"/>
<feature type="chain" id="PRO_0000247233" description="F-box only protein 43">
    <location>
        <begin position="1"/>
        <end position="708"/>
    </location>
</feature>
<feature type="domain" description="F-box">
    <location>
        <begin position="490"/>
        <end position="547"/>
    </location>
</feature>
<feature type="zinc finger region" description="ZBR-type" evidence="2">
    <location>
        <begin position="636"/>
        <end position="684"/>
    </location>
</feature>
<feature type="region of interest" description="Disordered" evidence="3">
    <location>
        <begin position="35"/>
        <end position="55"/>
    </location>
</feature>
<feature type="region of interest" description="Disordered" evidence="3">
    <location>
        <begin position="320"/>
        <end position="426"/>
    </location>
</feature>
<feature type="region of interest" description="Disordered" evidence="3">
    <location>
        <begin position="682"/>
        <end position="708"/>
    </location>
</feature>
<feature type="compositionally biased region" description="Polar residues" evidence="3">
    <location>
        <begin position="327"/>
        <end position="337"/>
    </location>
</feature>
<feature type="compositionally biased region" description="Basic residues" evidence="3">
    <location>
        <begin position="374"/>
        <end position="385"/>
    </location>
</feature>
<feature type="compositionally biased region" description="Basic and acidic residues" evidence="3">
    <location>
        <begin position="399"/>
        <end position="411"/>
    </location>
</feature>
<feature type="binding site" evidence="2">
    <location>
        <position position="640"/>
    </location>
    <ligand>
        <name>Zn(2+)</name>
        <dbReference type="ChEBI" id="CHEBI:29105"/>
        <label>1</label>
    </ligand>
</feature>
<feature type="binding site" evidence="2">
    <location>
        <position position="643"/>
    </location>
    <ligand>
        <name>Zn(2+)</name>
        <dbReference type="ChEBI" id="CHEBI:29105"/>
        <label>1</label>
    </ligand>
</feature>
<feature type="binding site" evidence="2">
    <location>
        <position position="658"/>
    </location>
    <ligand>
        <name>Zn(2+)</name>
        <dbReference type="ChEBI" id="CHEBI:29105"/>
        <label>1</label>
    </ligand>
</feature>
<feature type="binding site" evidence="2">
    <location>
        <position position="663"/>
    </location>
    <ligand>
        <name>Zn(2+)</name>
        <dbReference type="ChEBI" id="CHEBI:29105"/>
        <label>1</label>
    </ligand>
</feature>
<feature type="binding site" evidence="2">
    <location>
        <position position="668"/>
    </location>
    <ligand>
        <name>Zn(2+)</name>
        <dbReference type="ChEBI" id="CHEBI:29105"/>
        <label>2</label>
    </ligand>
</feature>
<feature type="binding site" evidence="2">
    <location>
        <position position="671"/>
    </location>
    <ligand>
        <name>Zn(2+)</name>
        <dbReference type="ChEBI" id="CHEBI:29105"/>
        <label>2</label>
    </ligand>
</feature>
<feature type="binding site" evidence="2">
    <location>
        <position position="676"/>
    </location>
    <ligand>
        <name>Zn(2+)</name>
        <dbReference type="ChEBI" id="CHEBI:29105"/>
        <label>2</label>
    </ligand>
</feature>
<feature type="binding site" evidence="2">
    <location>
        <position position="681"/>
    </location>
    <ligand>
        <name>Zn(2+)</name>
        <dbReference type="ChEBI" id="CHEBI:29105"/>
        <label>2</label>
    </ligand>
</feature>
<feature type="modified residue" description="Phosphoserine" evidence="9">
    <location>
        <position position="76"/>
    </location>
</feature>
<feature type="modified residue" description="Phosphothreonine" evidence="5">
    <location>
        <position position="234"/>
    </location>
</feature>
<feature type="modified residue" description="Phosphoserine" evidence="9">
    <location>
        <position position="334"/>
    </location>
</feature>
<feature type="sequence variant" id="VAR_086815" description="In SPGF64; uncertain significance." evidence="6">
    <original>E</original>
    <variation>G</variation>
    <location>
        <position position="98"/>
    </location>
</feature>
<feature type="sequence variant" id="VAR_061168" description="In dbSNP:rs2279102.">
    <original>P</original>
    <variation>L</variation>
    <location>
        <position position="139"/>
    </location>
</feature>
<feature type="sequence variant" id="VAR_061169" description="In dbSNP:rs2279102.">
    <original>P</original>
    <variation>R</variation>
    <location>
        <position position="139"/>
    </location>
</feature>
<feature type="sequence variant" id="VAR_086816" description="In SPGF64; uncertain significance." evidence="6">
    <original>G</original>
    <variation>A</variation>
    <location>
        <position position="149"/>
    </location>
</feature>
<feature type="sequence variant" id="VAR_086817" description="In SPGF64; uncertain significance." evidence="6">
    <original>I</original>
    <variation>L</variation>
    <location>
        <position position="250"/>
    </location>
</feature>
<feature type="sequence variant" id="VAR_086818" description="In OZEMA12 and SPGF64; reduced protein abundance; failed to significantly upregulate CCNB1; the variant does not rescue the mouse knockdown oocyte phenotype compared to wild-type protein." evidence="7 8">
    <location>
        <begin position="583"/>
        <end position="708"/>
    </location>
</feature>
<feature type="sequence variant" id="VAR_086819" description="In SPGF64; uncertain significance; dbSNP:rs1814398420." evidence="6">
    <original>E</original>
    <variation>G</variation>
    <location>
        <position position="594"/>
    </location>
</feature>
<feature type="sequence variant" id="VAR_086820" description="In SPGF64; uncertain significance; dbSNP:rs954702094." evidence="6">
    <original>G</original>
    <variation>D</variation>
    <location>
        <position position="664"/>
    </location>
</feature>
<feature type="mutagenesis site" description="Impairs ubiquitination and degradation in response to calcium." evidence="4">
    <original>DS</original>
    <variation>AA</variation>
    <location>
        <begin position="75"/>
        <end position="76"/>
    </location>
</feature>
<feature type="mutagenesis site" description="Impairs ubiquitination and degradation in response to calcium." evidence="4">
    <original>DS</original>
    <variation>AA</variation>
    <location>
        <begin position="333"/>
        <end position="334"/>
    </location>
</feature>
<gene>
    <name type="primary">FBXO43</name>
    <name type="synonym">EMI2</name>
</gene>
<comment type="function">
    <text evidence="1 7 8">Required to establish and maintain the arrest of oocytes at the second meiotic metaphase until fertilization. Acts by inhibiting the anaphase-promoting complex/cyclosome (APC/C) ubiquitin ligase. Probably recognizes and binds to some phosphorylated proteins and promotes their ubiquitination and degradation (PubMed:34052850, PubMed:34595750). Plays a vital role in modulating the ubiquitilation of CCNB1 and CDK1 during gametogenesis.</text>
</comment>
<comment type="pathway">
    <text>Protein modification; protein ubiquitination.</text>
</comment>
<comment type="subunit">
    <text evidence="1 8">Part of a SCF (SKP1-cullin-F-box) protein ligase complex. According to PubMed:34595750 interaction with SKP1 does not occur. Interacts with ANAPC2; the interaction is direct, ANAPC4, CDC16, CDC23; the interaction is direct, ANAPC10; the interaction is direct and CDC26, during spermatogenesis (PubMed:34595750). May interact with CDC20 (By similarity).</text>
</comment>
<comment type="interaction">
    <interactant intactId="EBI-12053217">
        <id>Q4G163</id>
    </interactant>
    <interactant intactId="EBI-302388">
        <id>P30153</id>
        <label>PPP2R1A</label>
    </interactant>
    <organismsDiffer>false</organismsDiffer>
    <experiments>3</experiments>
</comment>
<comment type="interaction">
    <interactant intactId="EBI-12053217">
        <id>Q4G163</id>
    </interactant>
    <interactant intactId="EBI-307486">
        <id>P63208</id>
        <label>SKP1</label>
    </interactant>
    <organismsDiffer>false</organismsDiffer>
    <experiments>3</experiments>
</comment>
<comment type="tissue specificity">
    <text evidence="8">Expressed in the testis.</text>
</comment>
<comment type="PTM">
    <text evidence="9 10">Phosphorylated on Ser-76, Thr-234 and Ser-334 in response to calcium, which is a prerequisite for ubiquitination and proteasomal degradation.</text>
</comment>
<comment type="PTM">
    <text evidence="4">Ubiquitinated in response to calcium, which promotes proteasomal degradation.</text>
</comment>
<comment type="disease" evidence="7">
    <disease id="DI-06313">
        <name>Oocyte/zygote/embryo maturation arrest 12</name>
        <acronym>OZEMA12</acronym>
        <description>An autosomal recessive disorder characterized by infertility due to early embryonic arrest.</description>
        <dbReference type="MIM" id="619697"/>
    </disease>
    <text>The disease is caused by variants affecting the gene represented in this entry.</text>
</comment>
<comment type="disease" evidence="6 8">
    <disease id="DI-06306">
        <name>Spermatogenic failure 64</name>
        <acronym>SPGF64</acronym>
        <description>An autosomal recessive male infertility disorder characterized by oligoasthenoteratozoospermia or non-obstructive azoospermia. Some patients have absent sperm due to meiotic arrest at the diplotene stage. Others show low sperm counts and reduced progressive motility.</description>
        <dbReference type="MIM" id="619696"/>
    </disease>
    <text>The disease is caused by variants affecting the gene represented in this entry.</text>
</comment>
<dbReference type="EMBL" id="AC021590">
    <property type="status" value="NOT_ANNOTATED_CDS"/>
    <property type="molecule type" value="Genomic_DNA"/>
</dbReference>
<dbReference type="CCDS" id="CCDS47904.1"/>
<dbReference type="RefSeq" id="NP_001025031.2">
    <property type="nucleotide sequence ID" value="NM_001029860.4"/>
</dbReference>
<dbReference type="SMR" id="Q4G163"/>
<dbReference type="BioGRID" id="130316">
    <property type="interactions" value="73"/>
</dbReference>
<dbReference type="ComplexPortal" id="CPX-8002">
    <property type="entry name" value="SCF E3 ubiquitin ligase complex, FBXO43 variant"/>
</dbReference>
<dbReference type="ELM" id="Q4G163"/>
<dbReference type="FunCoup" id="Q4G163">
    <property type="interactions" value="1324"/>
</dbReference>
<dbReference type="IntAct" id="Q4G163">
    <property type="interactions" value="4"/>
</dbReference>
<dbReference type="MINT" id="Q4G163"/>
<dbReference type="STRING" id="9606.ENSP00000403293"/>
<dbReference type="GlyCosmos" id="Q4G163">
    <property type="glycosylation" value="1 site, 1 glycan"/>
</dbReference>
<dbReference type="GlyGen" id="Q4G163">
    <property type="glycosylation" value="1 site, 1 O-linked glycan (1 site)"/>
</dbReference>
<dbReference type="iPTMnet" id="Q4G163"/>
<dbReference type="PhosphoSitePlus" id="Q4G163"/>
<dbReference type="BioMuta" id="FBXO43"/>
<dbReference type="DMDM" id="152031603"/>
<dbReference type="jPOST" id="Q4G163"/>
<dbReference type="MassIVE" id="Q4G163"/>
<dbReference type="PaxDb" id="9606-ENSP00000403293"/>
<dbReference type="PeptideAtlas" id="Q4G163"/>
<dbReference type="ProteomicsDB" id="62156"/>
<dbReference type="Antibodypedia" id="6910">
    <property type="antibodies" value="122 antibodies from 32 providers"/>
</dbReference>
<dbReference type="DNASU" id="286151"/>
<dbReference type="Ensembl" id="ENST00000428847.3">
    <property type="protein sequence ID" value="ENSP00000403293.2"/>
    <property type="gene ID" value="ENSG00000156509.14"/>
</dbReference>
<dbReference type="GeneID" id="286151"/>
<dbReference type="KEGG" id="hsa:286151"/>
<dbReference type="MANE-Select" id="ENST00000428847.3">
    <property type="protein sequence ID" value="ENSP00000403293.2"/>
    <property type="RefSeq nucleotide sequence ID" value="NM_001029860.4"/>
    <property type="RefSeq protein sequence ID" value="NP_001025031.2"/>
</dbReference>
<dbReference type="UCSC" id="uc003yjd.4">
    <property type="organism name" value="human"/>
</dbReference>
<dbReference type="AGR" id="HGNC:28521"/>
<dbReference type="CTD" id="286151"/>
<dbReference type="DisGeNET" id="286151"/>
<dbReference type="GeneCards" id="FBXO43"/>
<dbReference type="HGNC" id="HGNC:28521">
    <property type="gene designation" value="FBXO43"/>
</dbReference>
<dbReference type="HPA" id="ENSG00000156509">
    <property type="expression patterns" value="Tissue enriched (testis)"/>
</dbReference>
<dbReference type="MalaCards" id="FBXO43"/>
<dbReference type="MIM" id="609110">
    <property type="type" value="gene"/>
</dbReference>
<dbReference type="MIM" id="619696">
    <property type="type" value="phenotype"/>
</dbReference>
<dbReference type="MIM" id="619697">
    <property type="type" value="phenotype"/>
</dbReference>
<dbReference type="neXtProt" id="NX_Q4G163"/>
<dbReference type="OpenTargets" id="ENSG00000156509"/>
<dbReference type="Orphanet" id="399805">
    <property type="disease" value="Male infertility with azoospermia or oligozoospermia due to single gene mutation"/>
</dbReference>
<dbReference type="PharmGKB" id="PA134913061"/>
<dbReference type="VEuPathDB" id="HostDB:ENSG00000156509"/>
<dbReference type="eggNOG" id="ENOG502QRSQ">
    <property type="taxonomic scope" value="Eukaryota"/>
</dbReference>
<dbReference type="GeneTree" id="ENSGT00530000063692"/>
<dbReference type="HOGENOM" id="CLU_029091_0_0_1"/>
<dbReference type="InParanoid" id="Q4G163"/>
<dbReference type="OMA" id="FCILCLH"/>
<dbReference type="OrthoDB" id="9984940at2759"/>
<dbReference type="PAN-GO" id="Q4G163">
    <property type="GO annotations" value="3 GO annotations based on evolutionary models"/>
</dbReference>
<dbReference type="PhylomeDB" id="Q4G163"/>
<dbReference type="TreeFam" id="TF101170"/>
<dbReference type="PathwayCommons" id="Q4G163"/>
<dbReference type="SignaLink" id="Q4G163"/>
<dbReference type="SIGNOR" id="Q4G163"/>
<dbReference type="UniPathway" id="UPA00143"/>
<dbReference type="BioGRID-ORCS" id="286151">
    <property type="hits" value="18 hits in 1197 CRISPR screens"/>
</dbReference>
<dbReference type="ChiTaRS" id="FBXO43">
    <property type="organism name" value="human"/>
</dbReference>
<dbReference type="GenomeRNAi" id="286151"/>
<dbReference type="Pharos" id="Q4G163">
    <property type="development level" value="Tbio"/>
</dbReference>
<dbReference type="PRO" id="PR:Q4G163"/>
<dbReference type="Proteomes" id="UP000005640">
    <property type="component" value="Chromosome 8"/>
</dbReference>
<dbReference type="RNAct" id="Q4G163">
    <property type="molecule type" value="protein"/>
</dbReference>
<dbReference type="Bgee" id="ENSG00000156509">
    <property type="expression patterns" value="Expressed in secondary oocyte and 117 other cell types or tissues"/>
</dbReference>
<dbReference type="ExpressionAtlas" id="Q4G163">
    <property type="expression patterns" value="baseline and differential"/>
</dbReference>
<dbReference type="GO" id="GO:0005634">
    <property type="term" value="C:nucleus"/>
    <property type="evidence" value="ECO:0000318"/>
    <property type="project" value="GO_Central"/>
</dbReference>
<dbReference type="GO" id="GO:0008270">
    <property type="term" value="F:zinc ion binding"/>
    <property type="evidence" value="ECO:0007669"/>
    <property type="project" value="UniProtKB-KW"/>
</dbReference>
<dbReference type="GO" id="GO:0051321">
    <property type="term" value="P:meiotic cell cycle"/>
    <property type="evidence" value="ECO:0007669"/>
    <property type="project" value="UniProtKB-KW"/>
</dbReference>
<dbReference type="GO" id="GO:0010948">
    <property type="term" value="P:negative regulation of cell cycle process"/>
    <property type="evidence" value="ECO:0000315"/>
    <property type="project" value="UniProtKB"/>
</dbReference>
<dbReference type="GO" id="GO:0045835">
    <property type="term" value="P:negative regulation of meiotic nuclear division"/>
    <property type="evidence" value="ECO:0000318"/>
    <property type="project" value="GO_Central"/>
</dbReference>
<dbReference type="GO" id="GO:0016567">
    <property type="term" value="P:protein ubiquitination"/>
    <property type="evidence" value="ECO:0007669"/>
    <property type="project" value="UniProtKB-UniPathway"/>
</dbReference>
<dbReference type="GO" id="GO:0007088">
    <property type="term" value="P:regulation of mitotic nuclear division"/>
    <property type="evidence" value="ECO:0000318"/>
    <property type="project" value="GO_Central"/>
</dbReference>
<dbReference type="CDD" id="cd20365">
    <property type="entry name" value="BRcat_RBR_FBXO43"/>
    <property type="match status" value="1"/>
</dbReference>
<dbReference type="CDD" id="cd22171">
    <property type="entry name" value="F-box_FBXO43"/>
    <property type="match status" value="1"/>
</dbReference>
<dbReference type="FunFam" id="2.20.25.20:FF:000006">
    <property type="entry name" value="F-box only protein 5"/>
    <property type="match status" value="1"/>
</dbReference>
<dbReference type="FunFam" id="1.20.1280.50:FF:000046">
    <property type="entry name" value="F-box protein 43"/>
    <property type="match status" value="1"/>
</dbReference>
<dbReference type="Gene3D" id="1.20.1280.50">
    <property type="match status" value="1"/>
</dbReference>
<dbReference type="Gene3D" id="2.20.25.20">
    <property type="match status" value="1"/>
</dbReference>
<dbReference type="InterPro" id="IPR001810">
    <property type="entry name" value="F-box_dom"/>
</dbReference>
<dbReference type="InterPro" id="IPR047147">
    <property type="entry name" value="FBX5_43"/>
</dbReference>
<dbReference type="InterPro" id="IPR002867">
    <property type="entry name" value="IBR_dom"/>
</dbReference>
<dbReference type="InterPro" id="IPR044064">
    <property type="entry name" value="ZF_ZBR"/>
</dbReference>
<dbReference type="PANTHER" id="PTHR15493:SF1">
    <property type="entry name" value="F-BOX ONLY PROTEIN 43"/>
    <property type="match status" value="1"/>
</dbReference>
<dbReference type="PANTHER" id="PTHR15493">
    <property type="entry name" value="F-BOX ONLY PROTEIN 5 AND 43"/>
    <property type="match status" value="1"/>
</dbReference>
<dbReference type="Pfam" id="PF00646">
    <property type="entry name" value="F-box"/>
    <property type="match status" value="1"/>
</dbReference>
<dbReference type="SMART" id="SM00647">
    <property type="entry name" value="IBR"/>
    <property type="match status" value="1"/>
</dbReference>
<dbReference type="SUPFAM" id="SSF57850">
    <property type="entry name" value="RING/U-box"/>
    <property type="match status" value="1"/>
</dbReference>
<dbReference type="PROSITE" id="PS51872">
    <property type="entry name" value="ZF_ZBR"/>
    <property type="match status" value="1"/>
</dbReference>
<keyword id="KW-0225">Disease variant</keyword>
<keyword id="KW-0469">Meiosis</keyword>
<keyword id="KW-0479">Metal-binding</keyword>
<keyword id="KW-0597">Phosphoprotein</keyword>
<keyword id="KW-1267">Proteomics identification</keyword>
<keyword id="KW-1185">Reference proteome</keyword>
<keyword id="KW-0832">Ubl conjugation</keyword>
<keyword id="KW-0833">Ubl conjugation pathway</keyword>
<keyword id="KW-0862">Zinc</keyword>
<keyword id="KW-0863">Zinc-finger</keyword>